<protein>
    <recommendedName>
        <fullName evidence="1">Glucose-6-phosphate isomerase</fullName>
        <shortName evidence="1">GPI</shortName>
        <ecNumber evidence="1">5.3.1.9</ecNumber>
    </recommendedName>
    <alternativeName>
        <fullName evidence="1">Phosphoglucose isomerase</fullName>
        <shortName evidence="1">PGI</shortName>
    </alternativeName>
    <alternativeName>
        <fullName evidence="1">Phosphohexose isomerase</fullName>
        <shortName evidence="1">PHI</shortName>
    </alternativeName>
</protein>
<dbReference type="EC" id="5.3.1.9" evidence="1"/>
<dbReference type="EMBL" id="AE017220">
    <property type="protein sequence ID" value="AAX68006.1"/>
    <property type="molecule type" value="Genomic_DNA"/>
</dbReference>
<dbReference type="RefSeq" id="WP_001541296.1">
    <property type="nucleotide sequence ID" value="NC_006905.1"/>
</dbReference>
<dbReference type="SMR" id="Q57H06"/>
<dbReference type="KEGG" id="sec:SCH_4100"/>
<dbReference type="HOGENOM" id="CLU_017947_3_1_6"/>
<dbReference type="UniPathway" id="UPA00109">
    <property type="reaction ID" value="UER00181"/>
</dbReference>
<dbReference type="UniPathway" id="UPA00138"/>
<dbReference type="Proteomes" id="UP000000538">
    <property type="component" value="Chromosome"/>
</dbReference>
<dbReference type="GO" id="GO:0005829">
    <property type="term" value="C:cytosol"/>
    <property type="evidence" value="ECO:0007669"/>
    <property type="project" value="TreeGrafter"/>
</dbReference>
<dbReference type="GO" id="GO:0097367">
    <property type="term" value="F:carbohydrate derivative binding"/>
    <property type="evidence" value="ECO:0007669"/>
    <property type="project" value="InterPro"/>
</dbReference>
<dbReference type="GO" id="GO:0004347">
    <property type="term" value="F:glucose-6-phosphate isomerase activity"/>
    <property type="evidence" value="ECO:0007669"/>
    <property type="project" value="UniProtKB-UniRule"/>
</dbReference>
<dbReference type="GO" id="GO:0048029">
    <property type="term" value="F:monosaccharide binding"/>
    <property type="evidence" value="ECO:0007669"/>
    <property type="project" value="TreeGrafter"/>
</dbReference>
<dbReference type="GO" id="GO:0006094">
    <property type="term" value="P:gluconeogenesis"/>
    <property type="evidence" value="ECO:0007669"/>
    <property type="project" value="UniProtKB-UniRule"/>
</dbReference>
<dbReference type="GO" id="GO:0051156">
    <property type="term" value="P:glucose 6-phosphate metabolic process"/>
    <property type="evidence" value="ECO:0007669"/>
    <property type="project" value="TreeGrafter"/>
</dbReference>
<dbReference type="GO" id="GO:0006096">
    <property type="term" value="P:glycolytic process"/>
    <property type="evidence" value="ECO:0007669"/>
    <property type="project" value="UniProtKB-UniRule"/>
</dbReference>
<dbReference type="CDD" id="cd05015">
    <property type="entry name" value="SIS_PGI_1"/>
    <property type="match status" value="1"/>
</dbReference>
<dbReference type="CDD" id="cd05016">
    <property type="entry name" value="SIS_PGI_2"/>
    <property type="match status" value="1"/>
</dbReference>
<dbReference type="FunFam" id="1.10.1390.10:FF:000001">
    <property type="entry name" value="Glucose-6-phosphate isomerase"/>
    <property type="match status" value="1"/>
</dbReference>
<dbReference type="FunFam" id="3.40.50.10490:FF:000004">
    <property type="entry name" value="Glucose-6-phosphate isomerase"/>
    <property type="match status" value="1"/>
</dbReference>
<dbReference type="Gene3D" id="1.10.1390.10">
    <property type="match status" value="1"/>
</dbReference>
<dbReference type="Gene3D" id="3.40.50.10490">
    <property type="entry name" value="Glucose-6-phosphate isomerase like protein, domain 1"/>
    <property type="match status" value="2"/>
</dbReference>
<dbReference type="HAMAP" id="MF_00473">
    <property type="entry name" value="G6P_isomerase"/>
    <property type="match status" value="1"/>
</dbReference>
<dbReference type="InterPro" id="IPR001672">
    <property type="entry name" value="G6P_Isomerase"/>
</dbReference>
<dbReference type="InterPro" id="IPR023096">
    <property type="entry name" value="G6P_Isomerase_C"/>
</dbReference>
<dbReference type="InterPro" id="IPR018189">
    <property type="entry name" value="Phosphoglucose_isomerase_CS"/>
</dbReference>
<dbReference type="InterPro" id="IPR046348">
    <property type="entry name" value="SIS_dom_sf"/>
</dbReference>
<dbReference type="InterPro" id="IPR035476">
    <property type="entry name" value="SIS_PGI_1"/>
</dbReference>
<dbReference type="InterPro" id="IPR035482">
    <property type="entry name" value="SIS_PGI_2"/>
</dbReference>
<dbReference type="NCBIfam" id="NF001211">
    <property type="entry name" value="PRK00179.1"/>
    <property type="match status" value="1"/>
</dbReference>
<dbReference type="PANTHER" id="PTHR11469">
    <property type="entry name" value="GLUCOSE-6-PHOSPHATE ISOMERASE"/>
    <property type="match status" value="1"/>
</dbReference>
<dbReference type="PANTHER" id="PTHR11469:SF1">
    <property type="entry name" value="GLUCOSE-6-PHOSPHATE ISOMERASE"/>
    <property type="match status" value="1"/>
</dbReference>
<dbReference type="Pfam" id="PF00342">
    <property type="entry name" value="PGI"/>
    <property type="match status" value="1"/>
</dbReference>
<dbReference type="PRINTS" id="PR00662">
    <property type="entry name" value="G6PISOMERASE"/>
</dbReference>
<dbReference type="SUPFAM" id="SSF53697">
    <property type="entry name" value="SIS domain"/>
    <property type="match status" value="1"/>
</dbReference>
<dbReference type="PROSITE" id="PS00765">
    <property type="entry name" value="P_GLUCOSE_ISOMERASE_1"/>
    <property type="match status" value="1"/>
</dbReference>
<dbReference type="PROSITE" id="PS00174">
    <property type="entry name" value="P_GLUCOSE_ISOMERASE_2"/>
    <property type="match status" value="1"/>
</dbReference>
<dbReference type="PROSITE" id="PS51463">
    <property type="entry name" value="P_GLUCOSE_ISOMERASE_3"/>
    <property type="match status" value="1"/>
</dbReference>
<name>G6PI_SALCH</name>
<sequence length="549" mass="61466">MKNINPTQTSAWQALQKHYDEMKDVTIAELFANDSDRFAKFSATFDDLMLVDFSKNRITEETLAKLQDLAKETDLAGAIKSMFSGEKINRTEDRAVLHVALRNRSNTPIIVDGKDVMPEVNAVLEKMKTFSQAIISGQWKGYTGKAITDVVNIGIGGSDLGPFMVTEALRPYKNHLNMHFVSNVDGTHIAEVLKKVNPETTLFLVASKTFTTQETMTNAHSARDWFLKTAGDEKHVAKHFAALSTNVKAVGEFGIDTANMFEFWDWVGGRYSLWSAIGLSIILSVGFDNFVELLSGAHAMDKHFSTTPTEKNLPILLALIGIWYNNFFGAETEAILPYDQYMHRFAAYLQQGNMESNGKYVDRNGNAVDYQTGPIIWGEPGTNGQHAFYQLIHQGTKMVPCDFIAPAITHNPLSDHHQKLLSNFFAQTEALAFGKSREVVEQEYRDQGKDPAQLEHVVPFKVFEGNRPTNSILLREITPFSLGALIALYEHKIFTQGVILNIFTFDQWGVELGKQLANRILPELGDDKAISSHDSSTNGLINRYKAWRA</sequence>
<comment type="function">
    <text evidence="1">Catalyzes the reversible isomerization of glucose-6-phosphate to fructose-6-phosphate.</text>
</comment>
<comment type="catalytic activity">
    <reaction evidence="1">
        <text>alpha-D-glucose 6-phosphate = beta-D-fructose 6-phosphate</text>
        <dbReference type="Rhea" id="RHEA:11816"/>
        <dbReference type="ChEBI" id="CHEBI:57634"/>
        <dbReference type="ChEBI" id="CHEBI:58225"/>
        <dbReference type="EC" id="5.3.1.9"/>
    </reaction>
</comment>
<comment type="pathway">
    <text evidence="1">Carbohydrate biosynthesis; gluconeogenesis.</text>
</comment>
<comment type="pathway">
    <text evidence="1">Carbohydrate degradation; glycolysis; D-glyceraldehyde 3-phosphate and glycerone phosphate from D-glucose: step 2/4.</text>
</comment>
<comment type="subcellular location">
    <subcellularLocation>
        <location evidence="1">Cytoplasm</location>
    </subcellularLocation>
</comment>
<comment type="similarity">
    <text evidence="1">Belongs to the GPI family.</text>
</comment>
<evidence type="ECO:0000255" key="1">
    <source>
        <dbReference type="HAMAP-Rule" id="MF_00473"/>
    </source>
</evidence>
<keyword id="KW-0963">Cytoplasm</keyword>
<keyword id="KW-0312">Gluconeogenesis</keyword>
<keyword id="KW-0324">Glycolysis</keyword>
<keyword id="KW-0413">Isomerase</keyword>
<proteinExistence type="inferred from homology"/>
<gene>
    <name evidence="1" type="primary">pgi</name>
    <name type="ordered locus">SCH_4100</name>
</gene>
<reference key="1">
    <citation type="journal article" date="2005" name="Nucleic Acids Res.">
        <title>The genome sequence of Salmonella enterica serovar Choleraesuis, a highly invasive and resistant zoonotic pathogen.</title>
        <authorList>
            <person name="Chiu C.-H."/>
            <person name="Tang P."/>
            <person name="Chu C."/>
            <person name="Hu S."/>
            <person name="Bao Q."/>
            <person name="Yu J."/>
            <person name="Chou Y.-Y."/>
            <person name="Wang H.-S."/>
            <person name="Lee Y.-S."/>
        </authorList>
    </citation>
    <scope>NUCLEOTIDE SEQUENCE [LARGE SCALE GENOMIC DNA]</scope>
    <source>
        <strain>SC-B67</strain>
    </source>
</reference>
<accession>Q57H06</accession>
<organism>
    <name type="scientific">Salmonella choleraesuis (strain SC-B67)</name>
    <dbReference type="NCBI Taxonomy" id="321314"/>
    <lineage>
        <taxon>Bacteria</taxon>
        <taxon>Pseudomonadati</taxon>
        <taxon>Pseudomonadota</taxon>
        <taxon>Gammaproteobacteria</taxon>
        <taxon>Enterobacterales</taxon>
        <taxon>Enterobacteriaceae</taxon>
        <taxon>Salmonella</taxon>
    </lineage>
</organism>
<feature type="chain" id="PRO_0000180720" description="Glucose-6-phosphate isomerase">
    <location>
        <begin position="1"/>
        <end position="549"/>
    </location>
</feature>
<feature type="active site" description="Proton donor" evidence="1">
    <location>
        <position position="355"/>
    </location>
</feature>
<feature type="active site" evidence="1">
    <location>
        <position position="386"/>
    </location>
</feature>
<feature type="active site" evidence="1">
    <location>
        <position position="514"/>
    </location>
</feature>